<evidence type="ECO:0000250" key="1"/>
<evidence type="ECO:0000269" key="2">
    <source>
    </source>
</evidence>
<evidence type="ECO:0000305" key="3"/>
<evidence type="ECO:0007829" key="4">
    <source>
        <dbReference type="PDB" id="8A8E"/>
    </source>
</evidence>
<proteinExistence type="evidence at protein level"/>
<protein>
    <recommendedName>
        <fullName>Phosphoenolpyruvate synthase</fullName>
        <shortName>PEP synthase</shortName>
        <ecNumber>2.7.9.2</ecNumber>
    </recommendedName>
    <alternativeName>
        <fullName>Pyruvate, water dikinase</fullName>
    </alternativeName>
</protein>
<sequence>MAYRFIKWFEELSKNDVPLVGGKGANLGEMTNAGIPVPPGFCVTAEAYKYFVENVKVSKEDVKRILGEKVNKGTISEVLAQAPDEPRPLQDWIMDIISKTDVDDSKMLQENTEAIRTLIKSLDMPSEIAEEIKQAYKELSQRFGQEEVYVAVRSSATAEDLPEASFAGQQETYLDVLGADDVIDKVKRCWASLWTARATFYRAKQGFDHSKVYLSAVVQKMVNSEKSGVMFTANPVTNNRNEIMINASWGLGEAVVSGAVTPDEYIVEKGTWKIKEKVIAKKEVMVIRNPETGRGTVMVKVAEYLGPEWVEKQVLTDEQIIEVAKMGQKIEDHYGWPQDIEWAYDKDDGKLYIVQSRPITTLKEEATAEEAEEVEEAEVILKGLGASPGIGAGRVVVIFDASEIDKVKEGDILVTTMTNPDMVPAMKRAAAIVTDEGGRTSHAAIVSRELGIPCVVGTKEATKKLKTGMYVTVDGTRGLVYKGIVKSLVKKKEEAKAEGGQVVVAGAPLVTGTMVKVNVSMPEVAERAAATGADGVGLLRAEHMILSIGQHPIKFIKEGKEEELVEKLAEGIEKVAAAFYPRPVWYRTLDAPTNEFREMPGGEDEPEERNPMLGWRGIRRGLDQPELLRAEFKAIKKVVEKGYNNIGVMLPLVSHPEQIREAKRIAREVGLEPHKDVAWGVMIEVPAAAIIIEDLIKEGIDFVSFGTNDLTQYTLAIDRDNERVAKLYDETHPAVLKLIKHVIKVCKRYGVETSICGQAGSDPKMARILVRLGIDSISANPDAVQLIRQVVAQEERKLMLEAARKQLFEEEEEEELF</sequence>
<dbReference type="EC" id="2.7.9.2"/>
<dbReference type="EMBL" id="U08376">
    <property type="protein sequence ID" value="AAA81512.1"/>
    <property type="molecule type" value="Genomic_DNA"/>
</dbReference>
<dbReference type="EMBL" id="X80819">
    <property type="protein sequence ID" value="CAA56785.1"/>
    <property type="molecule type" value="Genomic_DNA"/>
</dbReference>
<dbReference type="EMBL" id="AE009950">
    <property type="protein sequence ID" value="AAL80167.1"/>
    <property type="molecule type" value="Genomic_DNA"/>
</dbReference>
<dbReference type="PIR" id="JC4176">
    <property type="entry name" value="JC4176"/>
</dbReference>
<dbReference type="RefSeq" id="WP_011011155.1">
    <property type="nucleotide sequence ID" value="NZ_CP023154.1"/>
</dbReference>
<dbReference type="PDB" id="8A8E">
    <property type="method" value="EM"/>
    <property type="resolution" value="2.90 A"/>
    <property type="chains" value="A/B/C/D/E/F/G/H/I/J/K/L/M/N/O/P/Q/R/S/T/U/V/W/X=1-817"/>
</dbReference>
<dbReference type="PDBsum" id="8A8E"/>
<dbReference type="EMDB" id="EMD-15230"/>
<dbReference type="SMR" id="P42850"/>
<dbReference type="STRING" id="186497.PF0043"/>
<dbReference type="PaxDb" id="186497-PF0043"/>
<dbReference type="GeneID" id="41711830"/>
<dbReference type="KEGG" id="pfu:PF0043"/>
<dbReference type="PATRIC" id="fig|186497.12.peg.47"/>
<dbReference type="eggNOG" id="arCOG01111">
    <property type="taxonomic scope" value="Archaea"/>
</dbReference>
<dbReference type="HOGENOM" id="CLU_007308_6_2_2"/>
<dbReference type="OrthoDB" id="23397at2157"/>
<dbReference type="PhylomeDB" id="P42850"/>
<dbReference type="BioCyc" id="MetaCyc:MONOMER-20544"/>
<dbReference type="BRENDA" id="2.7.9.2">
    <property type="organism ID" value="5243"/>
</dbReference>
<dbReference type="SABIO-RK" id="P42850"/>
<dbReference type="UniPathway" id="UPA00138"/>
<dbReference type="Proteomes" id="UP000001013">
    <property type="component" value="Chromosome"/>
</dbReference>
<dbReference type="GO" id="GO:0005524">
    <property type="term" value="F:ATP binding"/>
    <property type="evidence" value="ECO:0007669"/>
    <property type="project" value="UniProtKB-KW"/>
</dbReference>
<dbReference type="GO" id="GO:0046872">
    <property type="term" value="F:metal ion binding"/>
    <property type="evidence" value="ECO:0007669"/>
    <property type="project" value="UniProtKB-KW"/>
</dbReference>
<dbReference type="GO" id="GO:0008986">
    <property type="term" value="F:pyruvate, water dikinase activity"/>
    <property type="evidence" value="ECO:0007669"/>
    <property type="project" value="UniProtKB-EC"/>
</dbReference>
<dbReference type="GO" id="GO:0006094">
    <property type="term" value="P:gluconeogenesis"/>
    <property type="evidence" value="ECO:0007669"/>
    <property type="project" value="UniProtKB-UniPathway"/>
</dbReference>
<dbReference type="Gene3D" id="3.30.1490.20">
    <property type="entry name" value="ATP-grasp fold, A domain"/>
    <property type="match status" value="1"/>
</dbReference>
<dbReference type="Gene3D" id="3.30.470.20">
    <property type="entry name" value="ATP-grasp fold, B domain"/>
    <property type="match status" value="1"/>
</dbReference>
<dbReference type="Gene3D" id="3.20.20.60">
    <property type="entry name" value="Phosphoenolpyruvate-binding domains"/>
    <property type="match status" value="1"/>
</dbReference>
<dbReference type="Gene3D" id="3.50.30.10">
    <property type="entry name" value="Phosphohistidine domain"/>
    <property type="match status" value="1"/>
</dbReference>
<dbReference type="InterPro" id="IPR013815">
    <property type="entry name" value="ATP_grasp_subdomain_1"/>
</dbReference>
<dbReference type="InterPro" id="IPR008279">
    <property type="entry name" value="PEP-util_enz_mobile_dom"/>
</dbReference>
<dbReference type="InterPro" id="IPR006319">
    <property type="entry name" value="PEP_synth"/>
</dbReference>
<dbReference type="InterPro" id="IPR018274">
    <property type="entry name" value="PEP_util_AS"/>
</dbReference>
<dbReference type="InterPro" id="IPR000121">
    <property type="entry name" value="PEP_util_C"/>
</dbReference>
<dbReference type="InterPro" id="IPR023151">
    <property type="entry name" value="PEP_util_CS"/>
</dbReference>
<dbReference type="InterPro" id="IPR036637">
    <property type="entry name" value="Phosphohistidine_dom_sf"/>
</dbReference>
<dbReference type="InterPro" id="IPR002192">
    <property type="entry name" value="PPDK_AMP/ATP-bd"/>
</dbReference>
<dbReference type="InterPro" id="IPR015813">
    <property type="entry name" value="Pyrv/PenolPyrv_kinase-like_dom"/>
</dbReference>
<dbReference type="InterPro" id="IPR040442">
    <property type="entry name" value="Pyrv_kinase-like_dom_sf"/>
</dbReference>
<dbReference type="NCBIfam" id="TIGR01418">
    <property type="entry name" value="PEP_synth"/>
    <property type="match status" value="1"/>
</dbReference>
<dbReference type="NCBIfam" id="NF005057">
    <property type="entry name" value="PRK06464.1"/>
    <property type="match status" value="1"/>
</dbReference>
<dbReference type="PANTHER" id="PTHR43030">
    <property type="entry name" value="PHOSPHOENOLPYRUVATE SYNTHASE"/>
    <property type="match status" value="1"/>
</dbReference>
<dbReference type="PANTHER" id="PTHR43030:SF1">
    <property type="entry name" value="PHOSPHOENOLPYRUVATE SYNTHASE"/>
    <property type="match status" value="1"/>
</dbReference>
<dbReference type="Pfam" id="PF00391">
    <property type="entry name" value="PEP-utilizers"/>
    <property type="match status" value="1"/>
</dbReference>
<dbReference type="Pfam" id="PF02896">
    <property type="entry name" value="PEP-utilizers_C"/>
    <property type="match status" value="1"/>
</dbReference>
<dbReference type="Pfam" id="PF01326">
    <property type="entry name" value="PPDK_N"/>
    <property type="match status" value="1"/>
</dbReference>
<dbReference type="PIRSF" id="PIRSF000854">
    <property type="entry name" value="PEP_synthase"/>
    <property type="match status" value="1"/>
</dbReference>
<dbReference type="PRINTS" id="PR01736">
    <property type="entry name" value="PHPHTRNFRASE"/>
</dbReference>
<dbReference type="SUPFAM" id="SSF56059">
    <property type="entry name" value="Glutathione synthetase ATP-binding domain-like"/>
    <property type="match status" value="1"/>
</dbReference>
<dbReference type="SUPFAM" id="SSF51621">
    <property type="entry name" value="Phosphoenolpyruvate/pyruvate domain"/>
    <property type="match status" value="1"/>
</dbReference>
<dbReference type="SUPFAM" id="SSF52009">
    <property type="entry name" value="Phosphohistidine domain"/>
    <property type="match status" value="1"/>
</dbReference>
<dbReference type="PROSITE" id="PS00742">
    <property type="entry name" value="PEP_ENZYMES_2"/>
    <property type="match status" value="1"/>
</dbReference>
<dbReference type="PROSITE" id="PS00370">
    <property type="entry name" value="PEP_ENZYMES_PHOS_SITE"/>
    <property type="match status" value="1"/>
</dbReference>
<accession>P42850</accession>
<accession>Q59672</accession>
<keyword id="KW-0002">3D-structure</keyword>
<keyword id="KW-0067">ATP-binding</keyword>
<keyword id="KW-0903">Direct protein sequencing</keyword>
<keyword id="KW-0418">Kinase</keyword>
<keyword id="KW-0460">Magnesium</keyword>
<keyword id="KW-0479">Metal-binding</keyword>
<keyword id="KW-0547">Nucleotide-binding</keyword>
<keyword id="KW-1185">Reference proteome</keyword>
<keyword id="KW-0808">Transferase</keyword>
<comment type="function">
    <text evidence="2">Catalyzes the phosphorylation of pyruvate to phosphoenolpyruvate.</text>
</comment>
<comment type="catalytic activity">
    <reaction evidence="2">
        <text>pyruvate + ATP + H2O = phosphoenolpyruvate + AMP + phosphate + 2 H(+)</text>
        <dbReference type="Rhea" id="RHEA:11364"/>
        <dbReference type="ChEBI" id="CHEBI:15361"/>
        <dbReference type="ChEBI" id="CHEBI:15377"/>
        <dbReference type="ChEBI" id="CHEBI:15378"/>
        <dbReference type="ChEBI" id="CHEBI:30616"/>
        <dbReference type="ChEBI" id="CHEBI:43474"/>
        <dbReference type="ChEBI" id="CHEBI:58702"/>
        <dbReference type="ChEBI" id="CHEBI:456215"/>
        <dbReference type="EC" id="2.7.9.2"/>
    </reaction>
</comment>
<comment type="cofactor">
    <cofactor>
        <name>Mg(2+)</name>
        <dbReference type="ChEBI" id="CHEBI:18420"/>
    </cofactor>
</comment>
<comment type="biophysicochemical properties">
    <kinetics>
        <KM evidence="2">0.11 mM for pyruvate</KM>
        <KM evidence="2">0.4 mM for phosphoenolpyruvate</KM>
        <KM evidence="2">0.39 mM for ATP</KM>
        <KM evidence="2">1 mM for AMP</KM>
        <KM evidence="2">38.4 mM for phosphate</KM>
    </kinetics>
</comment>
<comment type="pathway">
    <text>Carbohydrate biosynthesis; gluconeogenesis.</text>
</comment>
<comment type="subunit">
    <text evidence="2">Homooctamer.</text>
</comment>
<comment type="domain">
    <text evidence="1">The N-terminal domain contains the ATP/Pi binding site, the central domain the pyrophosphate/phosphate carrier histidine, and the C-terminal domain the pyruvate binding site.</text>
</comment>
<comment type="miscellaneous">
    <text evidence="1">The reaction takes place in three steps, mediated by a phosphocarrier histidine residue located on the surface of the central domain. The two first partial reactions are catalyzed at an active site located on the N-terminal domain, and the third partial reaction is catalyzed at an active site located on the C-terminal domain. For catalytic turnover, the central domain swivels from the concave surface of the N-terminal domain to that of the C-terminal domain (By similarity).</text>
</comment>
<comment type="similarity">
    <text evidence="3">Belongs to the PEP-utilizing enzyme family.</text>
</comment>
<gene>
    <name type="primary">ppsA</name>
    <name type="ordered locus">PF0043</name>
</gene>
<organism>
    <name type="scientific">Pyrococcus furiosus (strain ATCC 43587 / DSM 3638 / JCM 8422 / Vc1)</name>
    <dbReference type="NCBI Taxonomy" id="186497"/>
    <lineage>
        <taxon>Archaea</taxon>
        <taxon>Methanobacteriati</taxon>
        <taxon>Methanobacteriota</taxon>
        <taxon>Thermococci</taxon>
        <taxon>Thermococcales</taxon>
        <taxon>Thermococcaceae</taxon>
        <taxon>Pyrococcus</taxon>
    </lineage>
</organism>
<feature type="initiator methionine" description="Removed" evidence="2">
    <location>
        <position position="1"/>
    </location>
</feature>
<feature type="chain" id="PRO_0000147044" description="Phosphoenolpyruvate synthase">
    <location>
        <begin position="2"/>
        <end position="817"/>
    </location>
</feature>
<feature type="active site" description="Tele-phosphohistidine intermediate" evidence="1">
    <location>
        <position position="442"/>
    </location>
</feature>
<feature type="active site" description="Proton donor" evidence="1">
    <location>
        <position position="756"/>
    </location>
</feature>
<feature type="binding site" evidence="1">
    <location>
        <position position="540"/>
    </location>
    <ligand>
        <name>substrate</name>
    </ligand>
</feature>
<feature type="binding site" evidence="1">
    <location>
        <position position="587"/>
    </location>
    <ligand>
        <name>substrate</name>
    </ligand>
</feature>
<feature type="binding site" evidence="1">
    <location>
        <position position="684"/>
    </location>
    <ligand>
        <name>Mg(2+)</name>
        <dbReference type="ChEBI" id="CHEBI:18420"/>
    </ligand>
</feature>
<feature type="binding site" evidence="1">
    <location>
        <position position="684"/>
    </location>
    <ligand>
        <name>substrate</name>
    </ligand>
</feature>
<feature type="binding site" evidence="1">
    <location>
        <position position="706"/>
    </location>
    <ligand>
        <name>substrate</name>
    </ligand>
</feature>
<feature type="binding site" evidence="1">
    <location>
        <position position="707"/>
    </location>
    <ligand>
        <name>substrate</name>
    </ligand>
</feature>
<feature type="binding site" evidence="1">
    <location>
        <position position="708"/>
    </location>
    <ligand>
        <name>substrate</name>
    </ligand>
</feature>
<feature type="binding site" evidence="1">
    <location>
        <position position="709"/>
    </location>
    <ligand>
        <name>Mg(2+)</name>
        <dbReference type="ChEBI" id="CHEBI:18420"/>
    </ligand>
</feature>
<feature type="binding site" evidence="1">
    <location>
        <position position="709"/>
    </location>
    <ligand>
        <name>substrate</name>
    </ligand>
</feature>
<feature type="sequence conflict" description="In Ref. 4; AA sequence." evidence="3" ref="4">
    <original>W</original>
    <variation>G</variation>
    <location>
        <position position="8"/>
    </location>
</feature>
<feature type="sequence conflict" description="In Ref. 1; AAA81512." evidence="3" ref="1">
    <original>K</original>
    <variation>Q</variation>
    <location>
        <position position="747"/>
    </location>
</feature>
<feature type="strand" evidence="4">
    <location>
        <begin position="512"/>
        <end position="519"/>
    </location>
</feature>
<feature type="strand" evidence="4">
    <location>
        <begin position="521"/>
        <end position="525"/>
    </location>
</feature>
<feature type="helix" evidence="4">
    <location>
        <begin position="526"/>
        <end position="529"/>
    </location>
</feature>
<feature type="turn" evidence="4">
    <location>
        <begin position="530"/>
        <end position="532"/>
    </location>
</feature>
<feature type="strand" evidence="4">
    <location>
        <begin position="534"/>
        <end position="540"/>
    </location>
</feature>
<feature type="helix" evidence="4">
    <location>
        <begin position="542"/>
        <end position="545"/>
    </location>
</feature>
<feature type="strand" evidence="4">
    <location>
        <begin position="548"/>
        <end position="550"/>
    </location>
</feature>
<feature type="helix" evidence="4">
    <location>
        <begin position="552"/>
        <end position="558"/>
    </location>
</feature>
<feature type="helix" evidence="4">
    <location>
        <begin position="561"/>
        <end position="578"/>
    </location>
</feature>
<feature type="strand" evidence="4">
    <location>
        <begin position="580"/>
        <end position="582"/>
    </location>
</feature>
<feature type="strand" evidence="4">
    <location>
        <begin position="584"/>
        <end position="587"/>
    </location>
</feature>
<feature type="helix" evidence="4">
    <location>
        <begin position="593"/>
        <end position="595"/>
    </location>
</feature>
<feature type="turn" evidence="4">
    <location>
        <begin position="596"/>
        <end position="598"/>
    </location>
</feature>
<feature type="turn" evidence="4">
    <location>
        <begin position="600"/>
        <end position="603"/>
    </location>
</feature>
<feature type="helix" evidence="4">
    <location>
        <begin position="611"/>
        <end position="613"/>
    </location>
</feature>
<feature type="helix" evidence="4">
    <location>
        <begin position="617"/>
        <end position="623"/>
    </location>
</feature>
<feature type="helix" evidence="4">
    <location>
        <begin position="625"/>
        <end position="639"/>
    </location>
</feature>
<feature type="turn" evidence="4">
    <location>
        <begin position="640"/>
        <end position="642"/>
    </location>
</feature>
<feature type="strand" evidence="4">
    <location>
        <begin position="646"/>
        <end position="650"/>
    </location>
</feature>
<feature type="helix" evidence="4">
    <location>
        <begin position="656"/>
        <end position="668"/>
    </location>
</feature>
<feature type="turn" evidence="4">
    <location>
        <begin position="673"/>
        <end position="675"/>
    </location>
</feature>
<feature type="strand" evidence="4">
    <location>
        <begin position="676"/>
        <end position="683"/>
    </location>
</feature>
<feature type="helix" evidence="4">
    <location>
        <begin position="686"/>
        <end position="690"/>
    </location>
</feature>
<feature type="helix" evidence="4">
    <location>
        <begin position="692"/>
        <end position="696"/>
    </location>
</feature>
<feature type="turn" evidence="4">
    <location>
        <begin position="697"/>
        <end position="699"/>
    </location>
</feature>
<feature type="strand" evidence="4">
    <location>
        <begin position="702"/>
        <end position="706"/>
    </location>
</feature>
<feature type="helix" evidence="4">
    <location>
        <begin position="707"/>
        <end position="715"/>
    </location>
</feature>
<feature type="turn" evidence="4">
    <location>
        <begin position="722"/>
        <end position="724"/>
    </location>
</feature>
<feature type="helix" evidence="4">
    <location>
        <begin position="725"/>
        <end position="727"/>
    </location>
</feature>
<feature type="helix" evidence="4">
    <location>
        <begin position="733"/>
        <end position="749"/>
    </location>
</feature>
<feature type="strand" evidence="4">
    <location>
        <begin position="752"/>
        <end position="758"/>
    </location>
</feature>
<feature type="helix" evidence="4">
    <location>
        <begin position="759"/>
        <end position="761"/>
    </location>
</feature>
<feature type="helix" evidence="4">
    <location>
        <begin position="763"/>
        <end position="772"/>
    </location>
</feature>
<feature type="strand" evidence="4">
    <location>
        <begin position="775"/>
        <end position="779"/>
    </location>
</feature>
<feature type="helix" evidence="4">
    <location>
        <begin position="784"/>
        <end position="806"/>
    </location>
</feature>
<name>PPSA_PYRFU</name>
<reference key="1">
    <citation type="journal article" date="1994" name="Gene">
        <title>Isolation, sequence and characterization of the maltose-regulated mlrA gene from the hyperthermophilic archaeum Pyrococcus furiosus.</title>
        <authorList>
            <person name="Robinson K.A."/>
            <person name="Schreier H.J."/>
        </authorList>
    </citation>
    <scope>NUCLEOTIDE SEQUENCE [GENOMIC DNA]</scope>
    <source>
        <strain>ATCC 43587 / DSM 3638 / JCM 8422 / Vc1</strain>
    </source>
</reference>
<reference key="2">
    <citation type="journal article" date="1995" name="Gene">
        <title>Cloning and sequencing of a gene from the archaeon Pyrococcus furiosus with high homology to a gene encoding phosphoenolpyruvate synthetase from Escherichia coli.</title>
        <authorList>
            <person name="Jones C.E."/>
            <person name="Fleming T.M."/>
            <person name="Piper P.W."/>
            <person name="Littlechild J.A."/>
            <person name="Cowan D.A."/>
        </authorList>
    </citation>
    <scope>NUCLEOTIDE SEQUENCE [GENOMIC DNA]</scope>
    <source>
        <strain>ATCC 43587 / DSM 3638 / JCM 8422 / Vc1</strain>
    </source>
</reference>
<reference key="3">
    <citation type="journal article" date="1999" name="Genetics">
        <title>Divergence of the hyperthermophilic archaea Pyrococcus furiosus and P. horikoshii inferred from complete genomic sequences.</title>
        <authorList>
            <person name="Maeder D.L."/>
            <person name="Weiss R.B."/>
            <person name="Dunn D.M."/>
            <person name="Cherry J.L."/>
            <person name="Gonzalez J.M."/>
            <person name="DiRuggiero J."/>
            <person name="Robb F.T."/>
        </authorList>
    </citation>
    <scope>NUCLEOTIDE SEQUENCE [LARGE SCALE GENOMIC DNA]</scope>
    <source>
        <strain>ATCC 43587 / DSM 3638 / JCM 8422 / Vc1</strain>
    </source>
</reference>
<reference key="4">
    <citation type="journal article" date="2001" name="J. Bacteriol.">
        <title>Phosphoenolpyruvate synthetase from the hyperthermophilic archaeon Pyrococcus furiosus.</title>
        <authorList>
            <person name="Hutchins A.M."/>
            <person name="Holden J.F."/>
            <person name="Adams M.W.W."/>
        </authorList>
    </citation>
    <scope>PROTEIN SEQUENCE OF 2-21</scope>
    <scope>FUNCTION</scope>
    <scope>SUBUNIT</scope>
    <scope>CATALYTIC ACTIVITY</scope>
    <scope>BIOPHYSICOCHEMICAL PROPERTIES</scope>
</reference>